<keyword id="KW-0028">Amino-acid biosynthesis</keyword>
<keyword id="KW-0100">Branched-chain amino acid biosynthesis</keyword>
<keyword id="KW-0460">Magnesium</keyword>
<keyword id="KW-0479">Metal-binding</keyword>
<keyword id="KW-0521">NADP</keyword>
<keyword id="KW-0560">Oxidoreductase</keyword>
<keyword id="KW-1185">Reference proteome</keyword>
<keyword id="KW-0677">Repeat</keyword>
<comment type="function">
    <text evidence="1">Involved in the biosynthesis of branched-chain amino acids (BCAA). Catalyzes an alkyl-migration followed by a ketol-acid reduction of (S)-2-acetolactate (S2AL) to yield (R)-2,3-dihydroxy-isovalerate. In the isomerase reaction, S2AL is rearranged via a Mg-dependent methyl migration to produce 3-hydroxy-3-methyl-2-ketobutyrate (HMKB). In the reductase reaction, this 2-ketoacid undergoes a metal-dependent reduction by NADPH to yield (R)-2,3-dihydroxy-isovalerate.</text>
</comment>
<comment type="catalytic activity">
    <reaction evidence="1">
        <text>(2R)-2,3-dihydroxy-3-methylbutanoate + NADP(+) = (2S)-2-acetolactate + NADPH + H(+)</text>
        <dbReference type="Rhea" id="RHEA:22068"/>
        <dbReference type="ChEBI" id="CHEBI:15378"/>
        <dbReference type="ChEBI" id="CHEBI:49072"/>
        <dbReference type="ChEBI" id="CHEBI:57783"/>
        <dbReference type="ChEBI" id="CHEBI:58349"/>
        <dbReference type="ChEBI" id="CHEBI:58476"/>
        <dbReference type="EC" id="1.1.1.86"/>
    </reaction>
</comment>
<comment type="catalytic activity">
    <reaction evidence="1">
        <text>(2R,3R)-2,3-dihydroxy-3-methylpentanoate + NADP(+) = (S)-2-ethyl-2-hydroxy-3-oxobutanoate + NADPH + H(+)</text>
        <dbReference type="Rhea" id="RHEA:13493"/>
        <dbReference type="ChEBI" id="CHEBI:15378"/>
        <dbReference type="ChEBI" id="CHEBI:49256"/>
        <dbReference type="ChEBI" id="CHEBI:49258"/>
        <dbReference type="ChEBI" id="CHEBI:57783"/>
        <dbReference type="ChEBI" id="CHEBI:58349"/>
        <dbReference type="EC" id="1.1.1.86"/>
    </reaction>
</comment>
<comment type="cofactor">
    <cofactor evidence="1">
        <name>Mg(2+)</name>
        <dbReference type="ChEBI" id="CHEBI:18420"/>
    </cofactor>
    <text evidence="1">Binds 2 magnesium ions per subunit.</text>
</comment>
<comment type="pathway">
    <text evidence="1">Amino-acid biosynthesis; L-isoleucine biosynthesis; L-isoleucine from 2-oxobutanoate: step 2/4.</text>
</comment>
<comment type="pathway">
    <text evidence="1">Amino-acid biosynthesis; L-valine biosynthesis; L-valine from pyruvate: step 2/4.</text>
</comment>
<comment type="similarity">
    <text evidence="1">Belongs to the ketol-acid reductoisomerase family.</text>
</comment>
<evidence type="ECO:0000255" key="1">
    <source>
        <dbReference type="HAMAP-Rule" id="MF_00435"/>
    </source>
</evidence>
<evidence type="ECO:0000255" key="2">
    <source>
        <dbReference type="PROSITE-ProRule" id="PRU01197"/>
    </source>
</evidence>
<evidence type="ECO:0000255" key="3">
    <source>
        <dbReference type="PROSITE-ProRule" id="PRU01198"/>
    </source>
</evidence>
<dbReference type="EC" id="1.1.1.86" evidence="1"/>
<dbReference type="EMBL" id="CP000038">
    <property type="protein sequence ID" value="AAZ90472.1"/>
    <property type="molecule type" value="Genomic_DNA"/>
</dbReference>
<dbReference type="RefSeq" id="WP_001295253.1">
    <property type="nucleotide sequence ID" value="NC_007384.1"/>
</dbReference>
<dbReference type="SMR" id="Q3YVJ0"/>
<dbReference type="GeneID" id="93778171"/>
<dbReference type="KEGG" id="ssn:SSON_3945"/>
<dbReference type="HOGENOM" id="CLU_551905_0_0_6"/>
<dbReference type="UniPathway" id="UPA00047">
    <property type="reaction ID" value="UER00056"/>
</dbReference>
<dbReference type="UniPathway" id="UPA00049">
    <property type="reaction ID" value="UER00060"/>
</dbReference>
<dbReference type="Proteomes" id="UP000002529">
    <property type="component" value="Chromosome"/>
</dbReference>
<dbReference type="GO" id="GO:0005829">
    <property type="term" value="C:cytosol"/>
    <property type="evidence" value="ECO:0007669"/>
    <property type="project" value="TreeGrafter"/>
</dbReference>
<dbReference type="GO" id="GO:0004455">
    <property type="term" value="F:ketol-acid reductoisomerase activity"/>
    <property type="evidence" value="ECO:0007669"/>
    <property type="project" value="UniProtKB-UniRule"/>
</dbReference>
<dbReference type="GO" id="GO:0000287">
    <property type="term" value="F:magnesium ion binding"/>
    <property type="evidence" value="ECO:0007669"/>
    <property type="project" value="UniProtKB-UniRule"/>
</dbReference>
<dbReference type="GO" id="GO:0009097">
    <property type="term" value="P:isoleucine biosynthetic process"/>
    <property type="evidence" value="ECO:0007669"/>
    <property type="project" value="UniProtKB-UniRule"/>
</dbReference>
<dbReference type="GO" id="GO:0009099">
    <property type="term" value="P:L-valine biosynthetic process"/>
    <property type="evidence" value="ECO:0007669"/>
    <property type="project" value="UniProtKB-UniRule"/>
</dbReference>
<dbReference type="FunFam" id="1.10.1040.10:FF:000007">
    <property type="entry name" value="Ketol-acid reductoisomerase (NADP(+))"/>
    <property type="match status" value="1"/>
</dbReference>
<dbReference type="FunFam" id="3.40.50.720:FF:000043">
    <property type="entry name" value="Ketol-acid reductoisomerase (NADP(+))"/>
    <property type="match status" value="1"/>
</dbReference>
<dbReference type="Gene3D" id="1.10.1040.10">
    <property type="entry name" value="N-(1-d-carboxylethyl)-l-norvaline Dehydrogenase, domain 2"/>
    <property type="match status" value="1"/>
</dbReference>
<dbReference type="Gene3D" id="3.40.50.720">
    <property type="entry name" value="NAD(P)-binding Rossmann-like Domain"/>
    <property type="match status" value="1"/>
</dbReference>
<dbReference type="HAMAP" id="MF_00435">
    <property type="entry name" value="IlvC"/>
    <property type="match status" value="1"/>
</dbReference>
<dbReference type="InterPro" id="IPR008927">
    <property type="entry name" value="6-PGluconate_DH-like_C_sf"/>
</dbReference>
<dbReference type="InterPro" id="IPR013328">
    <property type="entry name" value="6PGD_dom2"/>
</dbReference>
<dbReference type="InterPro" id="IPR013023">
    <property type="entry name" value="KARI"/>
</dbReference>
<dbReference type="InterPro" id="IPR000506">
    <property type="entry name" value="KARI_C"/>
</dbReference>
<dbReference type="InterPro" id="IPR013116">
    <property type="entry name" value="KARI_N"/>
</dbReference>
<dbReference type="InterPro" id="IPR036291">
    <property type="entry name" value="NAD(P)-bd_dom_sf"/>
</dbReference>
<dbReference type="NCBIfam" id="TIGR00465">
    <property type="entry name" value="ilvC"/>
    <property type="match status" value="1"/>
</dbReference>
<dbReference type="NCBIfam" id="NF003557">
    <property type="entry name" value="PRK05225.1"/>
    <property type="match status" value="1"/>
</dbReference>
<dbReference type="PANTHER" id="PTHR21371">
    <property type="entry name" value="KETOL-ACID REDUCTOISOMERASE, MITOCHONDRIAL"/>
    <property type="match status" value="1"/>
</dbReference>
<dbReference type="PANTHER" id="PTHR21371:SF1">
    <property type="entry name" value="KETOL-ACID REDUCTOISOMERASE, MITOCHONDRIAL"/>
    <property type="match status" value="1"/>
</dbReference>
<dbReference type="Pfam" id="PF01450">
    <property type="entry name" value="KARI_C"/>
    <property type="match status" value="2"/>
</dbReference>
<dbReference type="Pfam" id="PF07991">
    <property type="entry name" value="KARI_N"/>
    <property type="match status" value="1"/>
</dbReference>
<dbReference type="SUPFAM" id="SSF48179">
    <property type="entry name" value="6-phosphogluconate dehydrogenase C-terminal domain-like"/>
    <property type="match status" value="2"/>
</dbReference>
<dbReference type="SUPFAM" id="SSF51735">
    <property type="entry name" value="NAD(P)-binding Rossmann-fold domains"/>
    <property type="match status" value="1"/>
</dbReference>
<dbReference type="PROSITE" id="PS51851">
    <property type="entry name" value="KARI_C"/>
    <property type="match status" value="2"/>
</dbReference>
<dbReference type="PROSITE" id="PS51850">
    <property type="entry name" value="KARI_N"/>
    <property type="match status" value="1"/>
</dbReference>
<proteinExistence type="inferred from homology"/>
<reference key="1">
    <citation type="journal article" date="2005" name="Nucleic Acids Res.">
        <title>Genome dynamics and diversity of Shigella species, the etiologic agents of bacillary dysentery.</title>
        <authorList>
            <person name="Yang F."/>
            <person name="Yang J."/>
            <person name="Zhang X."/>
            <person name="Chen L."/>
            <person name="Jiang Y."/>
            <person name="Yan Y."/>
            <person name="Tang X."/>
            <person name="Wang J."/>
            <person name="Xiong Z."/>
            <person name="Dong J."/>
            <person name="Xue Y."/>
            <person name="Zhu Y."/>
            <person name="Xu X."/>
            <person name="Sun L."/>
            <person name="Chen S."/>
            <person name="Nie H."/>
            <person name="Peng J."/>
            <person name="Xu J."/>
            <person name="Wang Y."/>
            <person name="Yuan Z."/>
            <person name="Wen Y."/>
            <person name="Yao Z."/>
            <person name="Shen Y."/>
            <person name="Qiang B."/>
            <person name="Hou Y."/>
            <person name="Yu J."/>
            <person name="Jin Q."/>
        </authorList>
    </citation>
    <scope>NUCLEOTIDE SEQUENCE [LARGE SCALE GENOMIC DNA]</scope>
    <source>
        <strain>Ss046</strain>
    </source>
</reference>
<gene>
    <name evidence="1" type="primary">ilvC</name>
    <name type="ordered locus">SSON_3945</name>
</gene>
<sequence length="491" mass="54085">MANYFNTLNLRQQLAQLGKCRFMGRDEFADGASYLQGKKVVIVGCGAQGLNQGLNMRDSGLDISYALRKEAIAEKRASWRKATENGFKVGTYEELIPQADLVVNLTPDKQHSDVVRTVQPLMKDGAALGYSHGFNIVEVGEQIRKDITVVMVAPKCPGTEVREEYKRGFGVPTLIAVHPENDPKGEGMAIAKAWAAATGGHRAGVLESSFVAEVKSDLMGEQTILCGMLQAGSLLCFDKLVEEGTDPAYAEKLIQFGWETITEALKQGGITLMMDRLSNPAKLRAYALSEQLKEIMAPLFQKHMDDIISGEFSSGMMADWANDDKKLLTWREETGKTAFETAPQYEGKIGEQEYFDKGVLMIAMVKAGVELAFETMVDSGIIEESAYYESLHELPLIANTIARKRLYEMNVVISDTAEYGNYLFSYACVPLLKPFMAELQPGDLGKAIPEGAVDNAQLRDVNEAIRCHAIEQVGKKLRGYMTDMKRIAVAG</sequence>
<accession>Q3YVJ0</accession>
<organism>
    <name type="scientific">Shigella sonnei (strain Ss046)</name>
    <dbReference type="NCBI Taxonomy" id="300269"/>
    <lineage>
        <taxon>Bacteria</taxon>
        <taxon>Pseudomonadati</taxon>
        <taxon>Pseudomonadota</taxon>
        <taxon>Gammaproteobacteria</taxon>
        <taxon>Enterobacterales</taxon>
        <taxon>Enterobacteriaceae</taxon>
        <taxon>Shigella</taxon>
    </lineage>
</organism>
<protein>
    <recommendedName>
        <fullName evidence="1">Ketol-acid reductoisomerase (NADP(+))</fullName>
        <shortName evidence="1">KARI</shortName>
        <ecNumber evidence="1">1.1.1.86</ecNumber>
    </recommendedName>
    <alternativeName>
        <fullName evidence="1">Acetohydroxy-acid isomeroreductase</fullName>
        <shortName evidence="1">AHIR</shortName>
    </alternativeName>
    <alternativeName>
        <fullName evidence="1">Alpha-keto-beta-hydroxylacyl reductoisomerase</fullName>
    </alternativeName>
    <alternativeName>
        <fullName evidence="1">Ketol-acid reductoisomerase type 2</fullName>
    </alternativeName>
    <alternativeName>
        <fullName evidence="1">Ketol-acid reductoisomerase type II</fullName>
    </alternativeName>
</protein>
<feature type="chain" id="PRO_0000226201" description="Ketol-acid reductoisomerase (NADP(+))">
    <location>
        <begin position="1"/>
        <end position="491"/>
    </location>
</feature>
<feature type="domain" description="KARI N-terminal Rossmann" evidence="2">
    <location>
        <begin position="15"/>
        <end position="208"/>
    </location>
</feature>
<feature type="domain" description="KARI C-terminal knotted 1" evidence="3">
    <location>
        <begin position="209"/>
        <end position="344"/>
    </location>
</feature>
<feature type="domain" description="KARI C-terminal knotted 2" evidence="3">
    <location>
        <begin position="345"/>
        <end position="484"/>
    </location>
</feature>
<feature type="active site" evidence="1">
    <location>
        <position position="132"/>
    </location>
</feature>
<feature type="binding site" evidence="1">
    <location>
        <begin position="45"/>
        <end position="48"/>
    </location>
    <ligand>
        <name>NADP(+)</name>
        <dbReference type="ChEBI" id="CHEBI:58349"/>
    </ligand>
</feature>
<feature type="binding site" evidence="1">
    <location>
        <position position="68"/>
    </location>
    <ligand>
        <name>NADP(+)</name>
        <dbReference type="ChEBI" id="CHEBI:58349"/>
    </ligand>
</feature>
<feature type="binding site" evidence="1">
    <location>
        <position position="76"/>
    </location>
    <ligand>
        <name>NADP(+)</name>
        <dbReference type="ChEBI" id="CHEBI:58349"/>
    </ligand>
</feature>
<feature type="binding site" evidence="1">
    <location>
        <position position="78"/>
    </location>
    <ligand>
        <name>NADP(+)</name>
        <dbReference type="ChEBI" id="CHEBI:58349"/>
    </ligand>
</feature>
<feature type="binding site" evidence="1">
    <location>
        <begin position="108"/>
        <end position="110"/>
    </location>
    <ligand>
        <name>NADP(+)</name>
        <dbReference type="ChEBI" id="CHEBI:58349"/>
    </ligand>
</feature>
<feature type="binding site" evidence="1">
    <location>
        <position position="158"/>
    </location>
    <ligand>
        <name>NADP(+)</name>
        <dbReference type="ChEBI" id="CHEBI:58349"/>
    </ligand>
</feature>
<feature type="binding site" evidence="1">
    <location>
        <position position="217"/>
    </location>
    <ligand>
        <name>Mg(2+)</name>
        <dbReference type="ChEBI" id="CHEBI:18420"/>
        <label>1</label>
    </ligand>
</feature>
<feature type="binding site" evidence="1">
    <location>
        <position position="217"/>
    </location>
    <ligand>
        <name>Mg(2+)</name>
        <dbReference type="ChEBI" id="CHEBI:18420"/>
        <label>2</label>
    </ligand>
</feature>
<feature type="binding site" evidence="1">
    <location>
        <position position="221"/>
    </location>
    <ligand>
        <name>Mg(2+)</name>
        <dbReference type="ChEBI" id="CHEBI:18420"/>
        <label>1</label>
    </ligand>
</feature>
<feature type="binding site" evidence="1">
    <location>
        <position position="389"/>
    </location>
    <ligand>
        <name>Mg(2+)</name>
        <dbReference type="ChEBI" id="CHEBI:18420"/>
        <label>2</label>
    </ligand>
</feature>
<feature type="binding site" evidence="1">
    <location>
        <position position="393"/>
    </location>
    <ligand>
        <name>Mg(2+)</name>
        <dbReference type="ChEBI" id="CHEBI:18420"/>
        <label>2</label>
    </ligand>
</feature>
<feature type="binding site" evidence="1">
    <location>
        <position position="414"/>
    </location>
    <ligand>
        <name>substrate</name>
    </ligand>
</feature>
<name>ILVC_SHISS</name>